<sequence>VVLCFLGTGLVDMKVTQMSRYLIKRMGENVLLECGQDMSHETMYWYRQDPGLGLQLIYISYDVDSNSEGDIPKGYRVSRKKREHFSLILDSAKTNQTSVYFCAQGAPEQYFGPGTRLTVL</sequence>
<name>TVB3_MOUSE</name>
<protein>
    <recommendedName>
        <fullName>T-cell receptor beta chain V region PHDS203</fullName>
    </recommendedName>
</protein>
<keyword id="KW-1064">Adaptive immunity</keyword>
<keyword id="KW-1015">Disulfide bond</keyword>
<keyword id="KW-0391">Immunity</keyword>
<keyword id="KW-0393">Immunoglobulin domain</keyword>
<keyword id="KW-0675">Receptor</keyword>
<keyword id="KW-1185">Reference proteome</keyword>
<keyword id="KW-0732">Signal</keyword>
<keyword id="KW-1279">T cell receptor</keyword>
<proteinExistence type="predicted"/>
<dbReference type="PIR" id="A02006">
    <property type="entry name" value="RWMSV2"/>
</dbReference>
<dbReference type="SMR" id="P01736"/>
<dbReference type="FunCoup" id="P01736">
    <property type="interactions" value="1130"/>
</dbReference>
<dbReference type="UCSC" id="uc012ekt.1">
    <property type="organism name" value="mouse"/>
</dbReference>
<dbReference type="InParanoid" id="P01736"/>
<dbReference type="Proteomes" id="UP000000589">
    <property type="component" value="Unplaced"/>
</dbReference>
<dbReference type="RNAct" id="P01736">
    <property type="molecule type" value="protein"/>
</dbReference>
<dbReference type="GO" id="GO:0005886">
    <property type="term" value="C:plasma membrane"/>
    <property type="evidence" value="ECO:0000318"/>
    <property type="project" value="GO_Central"/>
</dbReference>
<dbReference type="GO" id="GO:0042101">
    <property type="term" value="C:T cell receptor complex"/>
    <property type="evidence" value="ECO:0007669"/>
    <property type="project" value="UniProtKB-KW"/>
</dbReference>
<dbReference type="GO" id="GO:0002250">
    <property type="term" value="P:adaptive immune response"/>
    <property type="evidence" value="ECO:0007669"/>
    <property type="project" value="UniProtKB-KW"/>
</dbReference>
<dbReference type="GO" id="GO:0007166">
    <property type="term" value="P:cell surface receptor signaling pathway"/>
    <property type="evidence" value="ECO:0000318"/>
    <property type="project" value="GO_Central"/>
</dbReference>
<dbReference type="CDD" id="cd05899">
    <property type="entry name" value="IgV_TCR_beta"/>
    <property type="match status" value="1"/>
</dbReference>
<dbReference type="Gene3D" id="2.60.40.10">
    <property type="entry name" value="Immunoglobulins"/>
    <property type="match status" value="1"/>
</dbReference>
<dbReference type="InterPro" id="IPR036179">
    <property type="entry name" value="Ig-like_dom_sf"/>
</dbReference>
<dbReference type="InterPro" id="IPR013783">
    <property type="entry name" value="Ig-like_fold"/>
</dbReference>
<dbReference type="InterPro" id="IPR003599">
    <property type="entry name" value="Ig_sub"/>
</dbReference>
<dbReference type="InterPro" id="IPR013106">
    <property type="entry name" value="Ig_V-set"/>
</dbReference>
<dbReference type="InterPro" id="IPR050413">
    <property type="entry name" value="TCR_beta_variable"/>
</dbReference>
<dbReference type="PANTHER" id="PTHR23268:SF121">
    <property type="entry name" value="T CELL RECEPTOR BETA VARIABLE 28"/>
    <property type="match status" value="1"/>
</dbReference>
<dbReference type="PANTHER" id="PTHR23268">
    <property type="entry name" value="T-CELL RECEPTOR BETA CHAIN"/>
    <property type="match status" value="1"/>
</dbReference>
<dbReference type="Pfam" id="PF07686">
    <property type="entry name" value="V-set"/>
    <property type="match status" value="1"/>
</dbReference>
<dbReference type="SMART" id="SM00409">
    <property type="entry name" value="IG"/>
    <property type="match status" value="1"/>
</dbReference>
<dbReference type="SUPFAM" id="SSF48726">
    <property type="entry name" value="Immunoglobulin"/>
    <property type="match status" value="1"/>
</dbReference>
<comment type="miscellaneous">
    <text>This clone was isolated from a cytotoxic T lymphocyte.</text>
</comment>
<accession>P01736</accession>
<organism>
    <name type="scientific">Mus musculus</name>
    <name type="common">Mouse</name>
    <dbReference type="NCBI Taxonomy" id="10090"/>
    <lineage>
        <taxon>Eukaryota</taxon>
        <taxon>Metazoa</taxon>
        <taxon>Chordata</taxon>
        <taxon>Craniata</taxon>
        <taxon>Vertebrata</taxon>
        <taxon>Euteleostomi</taxon>
        <taxon>Mammalia</taxon>
        <taxon>Eutheria</taxon>
        <taxon>Euarchontoglires</taxon>
        <taxon>Glires</taxon>
        <taxon>Rodentia</taxon>
        <taxon>Myomorpha</taxon>
        <taxon>Muroidea</taxon>
        <taxon>Muridae</taxon>
        <taxon>Murinae</taxon>
        <taxon>Mus</taxon>
        <taxon>Mus</taxon>
    </lineage>
</organism>
<feature type="signal peptide">
    <location>
        <begin position="1" status="less than"/>
        <end position="11"/>
    </location>
</feature>
<feature type="chain" id="PRO_0000033601" description="T-cell receptor beta chain V region PHDS203">
    <location>
        <begin position="12"/>
        <end position="120"/>
    </location>
</feature>
<feature type="region of interest" description="V segment">
    <location>
        <begin position="12"/>
        <end position="106"/>
    </location>
</feature>
<feature type="region of interest" description="J segment">
    <location>
        <begin position="107"/>
        <end position="120"/>
    </location>
</feature>
<feature type="disulfide bond" evidence="1">
    <location>
        <begin position="34"/>
        <end position="102"/>
    </location>
</feature>
<feature type="non-terminal residue">
    <location>
        <position position="1"/>
    </location>
</feature>
<feature type="non-terminal residue">
    <location>
        <position position="120"/>
    </location>
</feature>
<reference key="1">
    <citation type="journal article" date="1984" name="Nature">
        <title>Complete primary structure of a heterodimeric T-cell receptor deduced from cDNA sequences.</title>
        <authorList>
            <person name="Saito H."/>
            <person name="Kranz D.M."/>
            <person name="Takagaki Y."/>
            <person name="Hayday A.C."/>
            <person name="Eisen H.N."/>
            <person name="Tonegawa S."/>
        </authorList>
    </citation>
    <scope>NUCLEOTIDE SEQUENCE</scope>
    <source>
        <strain>BALB.B</strain>
    </source>
</reference>
<evidence type="ECO:0000250" key="1"/>